<gene>
    <name type="primary">apcA</name>
</gene>
<protein>
    <recommendedName>
        <fullName>Allophycocyanin alpha chain</fullName>
    </recommendedName>
</protein>
<name>PHAA_SYNY4</name>
<proteinExistence type="inferred from homology"/>
<feature type="initiator methionine" description="Removed" evidence="1">
    <location>
        <position position="1"/>
    </location>
</feature>
<feature type="chain" id="PRO_0000199079" description="Allophycocyanin alpha chain">
    <location>
        <begin position="2"/>
        <end position="161"/>
    </location>
</feature>
<feature type="binding site" description="covalent" evidence="1">
    <location>
        <position position="81"/>
    </location>
    <ligand>
        <name>(2R,3E)-phycocyanobilin</name>
        <dbReference type="ChEBI" id="CHEBI:85275"/>
    </ligand>
</feature>
<feature type="modified residue" description="N4-methylasparagine" evidence="1">
    <location>
        <position position="71"/>
    </location>
</feature>
<keyword id="KW-0042">Antenna complex</keyword>
<keyword id="KW-0089">Bile pigment</keyword>
<keyword id="KW-0157">Chromophore</keyword>
<keyword id="KW-0249">Electron transport</keyword>
<keyword id="KW-0472">Membrane</keyword>
<keyword id="KW-0488">Methylation</keyword>
<keyword id="KW-0602">Photosynthesis</keyword>
<keyword id="KW-0605">Phycobilisome</keyword>
<keyword id="KW-0793">Thylakoid</keyword>
<keyword id="KW-0813">Transport</keyword>
<reference key="1">
    <citation type="journal article" date="1993" name="Plant Mol. Biol.">
        <title>Isolation and characterization of the genes encoding allophycocyanin subunits and two linker proteins from Synechocystis 6714.</title>
        <authorList>
            <person name="Dimagno L.M."/>
            <person name="Haselkorn R."/>
        </authorList>
    </citation>
    <scope>NUCLEOTIDE SEQUENCE [GENOMIC DNA]</scope>
</reference>
<dbReference type="EMBL" id="L02308">
    <property type="protein sequence ID" value="AAA69682.1"/>
    <property type="molecule type" value="Genomic_DNA"/>
</dbReference>
<dbReference type="PIR" id="S33623">
    <property type="entry name" value="S33623"/>
</dbReference>
<dbReference type="RefSeq" id="WP_028948242.1">
    <property type="nucleotide sequence ID" value="NZ_CP007542.1"/>
</dbReference>
<dbReference type="SMR" id="Q02923"/>
<dbReference type="STRING" id="1147.D082_33990"/>
<dbReference type="eggNOG" id="ENOG502Z7RG">
    <property type="taxonomic scope" value="Bacteria"/>
</dbReference>
<dbReference type="OrthoDB" id="512145at2"/>
<dbReference type="GO" id="GO:0030089">
    <property type="term" value="C:phycobilisome"/>
    <property type="evidence" value="ECO:0007669"/>
    <property type="project" value="UniProtKB-KW"/>
</dbReference>
<dbReference type="GO" id="GO:0031676">
    <property type="term" value="C:plasma membrane-derived thylakoid membrane"/>
    <property type="evidence" value="ECO:0007669"/>
    <property type="project" value="UniProtKB-SubCell"/>
</dbReference>
<dbReference type="GO" id="GO:0015979">
    <property type="term" value="P:photosynthesis"/>
    <property type="evidence" value="ECO:0007669"/>
    <property type="project" value="UniProtKB-KW"/>
</dbReference>
<dbReference type="CDD" id="cd12125">
    <property type="entry name" value="APC_alpha"/>
    <property type="match status" value="1"/>
</dbReference>
<dbReference type="FunFam" id="1.10.490.20:FF:000001">
    <property type="entry name" value="Allophycocyanin alpha chain"/>
    <property type="match status" value="1"/>
</dbReference>
<dbReference type="Gene3D" id="1.10.490.20">
    <property type="entry name" value="Phycocyanins"/>
    <property type="match status" value="1"/>
</dbReference>
<dbReference type="InterPro" id="IPR009050">
    <property type="entry name" value="Globin-like_sf"/>
</dbReference>
<dbReference type="InterPro" id="IPR012128">
    <property type="entry name" value="Phycobilisome_asu/bsu"/>
</dbReference>
<dbReference type="InterPro" id="IPR038719">
    <property type="entry name" value="Phycobilisome_asu/bsu_sf"/>
</dbReference>
<dbReference type="PANTHER" id="PTHR34011:SF2">
    <property type="entry name" value="ALLOPHYCOCYANIN ALPHA CHAIN"/>
    <property type="match status" value="1"/>
</dbReference>
<dbReference type="PANTHER" id="PTHR34011">
    <property type="entry name" value="PHYCOBILISOME 32.1 KDA LINKER POLYPEPTIDE, PHYCOCYANIN-ASSOCIATED, ROD 2-RELATED"/>
    <property type="match status" value="1"/>
</dbReference>
<dbReference type="Pfam" id="PF00502">
    <property type="entry name" value="Phycobilisome"/>
    <property type="match status" value="1"/>
</dbReference>
<dbReference type="PIRSF" id="PIRSF000081">
    <property type="entry name" value="Phycocyanin"/>
    <property type="match status" value="1"/>
</dbReference>
<dbReference type="SUPFAM" id="SSF46458">
    <property type="entry name" value="Globin-like"/>
    <property type="match status" value="1"/>
</dbReference>
<sequence length="161" mass="17355">MSIVTKSIVNADAEARYLSPGELDRIKAFVTGGAARLRIAETLTGSRETIVKQAGDRLFQKRPDIVSPGGNAYGEEMTATCLRDMDYYLRLVTYGVVSGDVTPIEEIGLVGVREMYRSLGTPIEAVAQSVREMKEVASGLMSSDDAAEASAYFDFVIGAMS</sequence>
<organism>
    <name type="scientific">Synechocystis sp. (strain PCC 6714)</name>
    <name type="common">Aphanocapsa sp. (strain PCC 6714)</name>
    <dbReference type="NCBI Taxonomy" id="1147"/>
    <lineage>
        <taxon>Bacteria</taxon>
        <taxon>Bacillati</taxon>
        <taxon>Cyanobacteriota</taxon>
        <taxon>Cyanophyceae</taxon>
        <taxon>Synechococcales</taxon>
        <taxon>Merismopediaceae</taxon>
        <taxon>Synechocystis</taxon>
    </lineage>
</organism>
<accession>Q02923</accession>
<evidence type="ECO:0000250" key="1"/>
<evidence type="ECO:0000305" key="2"/>
<comment type="function">
    <text>Light-harvesting photosynthetic bile pigment-protein from the phycobiliprotein complex. Allophycocyanin has a maximum absorption at approximately 650 nanometers.</text>
</comment>
<comment type="subunit">
    <text evidence="1">Heterodimer of an alpha and a beta chain.</text>
</comment>
<comment type="subcellular location">
    <subcellularLocation>
        <location evidence="1">Cellular thylakoid membrane</location>
        <topology evidence="1">Peripheral membrane protein</topology>
        <orientation evidence="1">Cytoplasmic side</orientation>
    </subcellularLocation>
    <text evidence="1">Forms the core of the phycobilisome.</text>
</comment>
<comment type="PTM">
    <text evidence="1">Contains one covalently linked phycocyanobilin chromophore.</text>
</comment>
<comment type="similarity">
    <text evidence="2">Belongs to the phycobiliprotein family.</text>
</comment>